<organism>
    <name type="scientific">Actinobacillus pleuropneumoniae serotype 5b (strain L20)</name>
    <dbReference type="NCBI Taxonomy" id="416269"/>
    <lineage>
        <taxon>Bacteria</taxon>
        <taxon>Pseudomonadati</taxon>
        <taxon>Pseudomonadota</taxon>
        <taxon>Gammaproteobacteria</taxon>
        <taxon>Pasteurellales</taxon>
        <taxon>Pasteurellaceae</taxon>
        <taxon>Actinobacillus</taxon>
    </lineage>
</organism>
<dbReference type="EMBL" id="CP000569">
    <property type="protein sequence ID" value="ABN74824.1"/>
    <property type="molecule type" value="Genomic_DNA"/>
</dbReference>
<dbReference type="RefSeq" id="WP_005599252.1">
    <property type="nucleotide sequence ID" value="NC_009053.1"/>
</dbReference>
<dbReference type="SMR" id="A3N338"/>
<dbReference type="STRING" id="416269.APL_1740"/>
<dbReference type="EnsemblBacteria" id="ABN74824">
    <property type="protein sequence ID" value="ABN74824"/>
    <property type="gene ID" value="APL_1740"/>
</dbReference>
<dbReference type="KEGG" id="apl:APL_1740"/>
<dbReference type="eggNOG" id="COG2924">
    <property type="taxonomic scope" value="Bacteria"/>
</dbReference>
<dbReference type="HOGENOM" id="CLU_170994_0_0_6"/>
<dbReference type="Proteomes" id="UP000001432">
    <property type="component" value="Chromosome"/>
</dbReference>
<dbReference type="GO" id="GO:0005829">
    <property type="term" value="C:cytosol"/>
    <property type="evidence" value="ECO:0007669"/>
    <property type="project" value="TreeGrafter"/>
</dbReference>
<dbReference type="GO" id="GO:0005506">
    <property type="term" value="F:iron ion binding"/>
    <property type="evidence" value="ECO:0007669"/>
    <property type="project" value="UniProtKB-UniRule"/>
</dbReference>
<dbReference type="GO" id="GO:0034599">
    <property type="term" value="P:cellular response to oxidative stress"/>
    <property type="evidence" value="ECO:0007669"/>
    <property type="project" value="TreeGrafter"/>
</dbReference>
<dbReference type="FunFam" id="1.10.3880.10:FF:000001">
    <property type="entry name" value="Probable Fe(2+)-trafficking protein"/>
    <property type="match status" value="1"/>
</dbReference>
<dbReference type="Gene3D" id="1.10.3880.10">
    <property type="entry name" value="Fe(II) trafficking protein YggX"/>
    <property type="match status" value="1"/>
</dbReference>
<dbReference type="HAMAP" id="MF_00686">
    <property type="entry name" value="Fe_traffic_YggX"/>
    <property type="match status" value="1"/>
</dbReference>
<dbReference type="InterPro" id="IPR007457">
    <property type="entry name" value="Fe_traffick_prot_YggX"/>
</dbReference>
<dbReference type="InterPro" id="IPR036766">
    <property type="entry name" value="Fe_traffick_prot_YggX_sf"/>
</dbReference>
<dbReference type="NCBIfam" id="NF003817">
    <property type="entry name" value="PRK05408.1"/>
    <property type="match status" value="1"/>
</dbReference>
<dbReference type="PANTHER" id="PTHR36965">
    <property type="entry name" value="FE(2+)-TRAFFICKING PROTEIN-RELATED"/>
    <property type="match status" value="1"/>
</dbReference>
<dbReference type="PANTHER" id="PTHR36965:SF1">
    <property type="entry name" value="FE(2+)-TRAFFICKING PROTEIN-RELATED"/>
    <property type="match status" value="1"/>
</dbReference>
<dbReference type="Pfam" id="PF04362">
    <property type="entry name" value="Iron_traffic"/>
    <property type="match status" value="1"/>
</dbReference>
<dbReference type="PIRSF" id="PIRSF029827">
    <property type="entry name" value="Fe_traffic_YggX"/>
    <property type="match status" value="1"/>
</dbReference>
<dbReference type="SUPFAM" id="SSF111148">
    <property type="entry name" value="YggX-like"/>
    <property type="match status" value="1"/>
</dbReference>
<proteinExistence type="inferred from homology"/>
<gene>
    <name type="ordered locus">APL_1740</name>
</gene>
<accession>A3N338</accession>
<comment type="function">
    <text evidence="1">Could be a mediator in iron transactions between iron acquisition and iron-requiring processes, such as synthesis and/or repair of Fe-S clusters in biosynthetic enzymes.</text>
</comment>
<comment type="similarity">
    <text evidence="1">Belongs to the Fe(2+)-trafficking protein family.</text>
</comment>
<reference key="1">
    <citation type="journal article" date="2008" name="J. Bacteriol.">
        <title>The complete genome sequence of Actinobacillus pleuropneumoniae L20 (serotype 5b).</title>
        <authorList>
            <person name="Foote S.J."/>
            <person name="Bosse J.T."/>
            <person name="Bouevitch A.B."/>
            <person name="Langford P.R."/>
            <person name="Young N.M."/>
            <person name="Nash J.H.E."/>
        </authorList>
    </citation>
    <scope>NUCLEOTIDE SEQUENCE [LARGE SCALE GENOMIC DNA]</scope>
    <source>
        <strain>L20</strain>
    </source>
</reference>
<keyword id="KW-0408">Iron</keyword>
<keyword id="KW-1185">Reference proteome</keyword>
<sequence length="91" mass="10763">MARTVFCEYLKQEAEGLDFQLYPGELGKRIFDSISKQAWSEWIKKQTMLVNEKKLSMMNAEHRKLLETEMVNFLFEGKEVQIEGYVPVEQK</sequence>
<feature type="chain" id="PRO_1000045011" description="Probable Fe(2+)-trafficking protein">
    <location>
        <begin position="1"/>
        <end position="91"/>
    </location>
</feature>
<evidence type="ECO:0000255" key="1">
    <source>
        <dbReference type="HAMAP-Rule" id="MF_00686"/>
    </source>
</evidence>
<name>FETP_ACTP2</name>
<protein>
    <recommendedName>
        <fullName evidence="1">Probable Fe(2+)-trafficking protein</fullName>
    </recommendedName>
</protein>